<organism>
    <name type="scientific">Toxoplasma gondii (strain ATCC 50861 / VEG)</name>
    <dbReference type="NCBI Taxonomy" id="432359"/>
    <lineage>
        <taxon>Eukaryota</taxon>
        <taxon>Sar</taxon>
        <taxon>Alveolata</taxon>
        <taxon>Apicomplexa</taxon>
        <taxon>Conoidasida</taxon>
        <taxon>Coccidia</taxon>
        <taxon>Eucoccidiorida</taxon>
        <taxon>Eimeriorina</taxon>
        <taxon>Sarcocystidae</taxon>
        <taxon>Toxoplasma</taxon>
    </lineage>
</organism>
<keyword id="KW-0001">2Fe-2S</keyword>
<keyword id="KW-0004">4Fe-4S</keyword>
<keyword id="KW-0963">Cytoplasm</keyword>
<keyword id="KW-0408">Iron</keyword>
<keyword id="KW-0411">Iron-sulfur</keyword>
<keyword id="KW-0479">Metal-binding</keyword>
<keyword id="KW-0496">Mitochondrion</keyword>
<keyword id="KW-1185">Reference proteome</keyword>
<dbReference type="EMBL" id="AAYL02000331">
    <property type="protein sequence ID" value="ESS28767.1"/>
    <property type="molecule type" value="Genomic_DNA"/>
</dbReference>
<dbReference type="STRING" id="432359.B9Q0C2"/>
<dbReference type="PaxDb" id="5811-TGME49_016900"/>
<dbReference type="EnsemblProtists" id="ESS28767">
    <property type="protein sequence ID" value="ESS28767"/>
    <property type="gene ID" value="TGVEG_216900"/>
</dbReference>
<dbReference type="EnsemblProtists" id="TGME49_216900-t26_1">
    <property type="protein sequence ID" value="TGME49_216900-t26_1"/>
    <property type="gene ID" value="TGME49_216900"/>
</dbReference>
<dbReference type="VEuPathDB" id="ToxoDB:TGVEG_216900"/>
<dbReference type="eggNOG" id="KOG4020">
    <property type="taxonomic scope" value="Eukaryota"/>
</dbReference>
<dbReference type="Proteomes" id="UP000002226">
    <property type="component" value="Partially assembled WGS sequence"/>
</dbReference>
<dbReference type="GO" id="GO:0005758">
    <property type="term" value="C:mitochondrial intermembrane space"/>
    <property type="evidence" value="ECO:0007669"/>
    <property type="project" value="UniProtKB-SubCell"/>
</dbReference>
<dbReference type="GO" id="GO:0051537">
    <property type="term" value="F:2 iron, 2 sulfur cluster binding"/>
    <property type="evidence" value="ECO:0007669"/>
    <property type="project" value="UniProtKB-UniRule"/>
</dbReference>
<dbReference type="GO" id="GO:0051539">
    <property type="term" value="F:4 iron, 4 sulfur cluster binding"/>
    <property type="evidence" value="ECO:0007669"/>
    <property type="project" value="UniProtKB-KW"/>
</dbReference>
<dbReference type="GO" id="GO:0009055">
    <property type="term" value="F:electron transfer activity"/>
    <property type="evidence" value="ECO:0007669"/>
    <property type="project" value="UniProtKB-UniRule"/>
</dbReference>
<dbReference type="GO" id="GO:0046872">
    <property type="term" value="F:metal ion binding"/>
    <property type="evidence" value="ECO:0007669"/>
    <property type="project" value="UniProtKB-KW"/>
</dbReference>
<dbReference type="GO" id="GO:0016226">
    <property type="term" value="P:iron-sulfur cluster assembly"/>
    <property type="evidence" value="ECO:0007669"/>
    <property type="project" value="UniProtKB-UniRule"/>
</dbReference>
<dbReference type="HAMAP" id="MF_03115">
    <property type="entry name" value="Anamorsin"/>
    <property type="match status" value="1"/>
</dbReference>
<dbReference type="InterPro" id="IPR007785">
    <property type="entry name" value="Anamorsin"/>
</dbReference>
<dbReference type="InterPro" id="IPR046408">
    <property type="entry name" value="CIAPIN1"/>
</dbReference>
<dbReference type="PANTHER" id="PTHR13273">
    <property type="entry name" value="ANAMORSIN"/>
    <property type="match status" value="1"/>
</dbReference>
<dbReference type="PANTHER" id="PTHR13273:SF14">
    <property type="entry name" value="ANAMORSIN"/>
    <property type="match status" value="1"/>
</dbReference>
<dbReference type="Pfam" id="PF05093">
    <property type="entry name" value="CIAPIN1"/>
    <property type="match status" value="1"/>
</dbReference>
<reference key="1">
    <citation type="submission" date="2008-03" db="EMBL/GenBank/DDBJ databases">
        <title>Annotation of Toxoplasma gondii VEG.</title>
        <authorList>
            <person name="Lorenzi H."/>
            <person name="Inman J."/>
            <person name="Amedeo P."/>
            <person name="Brunk B."/>
            <person name="Roos D."/>
            <person name="Caler E."/>
        </authorList>
    </citation>
    <scope>NUCLEOTIDE SEQUENCE [LARGE SCALE GENOMIC DNA]</scope>
    <source>
        <strain>ATCC 50861 / VEG</strain>
    </source>
</reference>
<protein>
    <recommendedName>
        <fullName evidence="1">Anamorsin homolog</fullName>
    </recommendedName>
    <alternativeName>
        <fullName evidence="1">Fe-S cluster assembly protein DRE2 homolog</fullName>
    </alternativeName>
</protein>
<feature type="chain" id="PRO_0000392362" description="Anamorsin homolog">
    <location>
        <begin position="1"/>
        <end position="443"/>
    </location>
</feature>
<feature type="region of interest" description="N-terminal SAM-like domain" evidence="1">
    <location>
        <begin position="136"/>
        <end position="301"/>
    </location>
</feature>
<feature type="region of interest" description="Linker" evidence="1">
    <location>
        <begin position="302"/>
        <end position="331"/>
    </location>
</feature>
<feature type="region of interest" description="Fe-S binding site A" evidence="1">
    <location>
        <begin position="341"/>
        <end position="353"/>
    </location>
</feature>
<feature type="region of interest" description="Fe-S binding site B" evidence="1">
    <location>
        <begin position="380"/>
        <end position="394"/>
    </location>
</feature>
<feature type="short sequence motif" description="Cx2C motif 1" evidence="1">
    <location>
        <begin position="380"/>
        <end position="383"/>
    </location>
</feature>
<feature type="short sequence motif" description="Cx2C motif 2" evidence="1">
    <location>
        <begin position="391"/>
        <end position="394"/>
    </location>
</feature>
<feature type="binding site" evidence="1">
    <location>
        <position position="341"/>
    </location>
    <ligand>
        <name>[2Fe-2S] cluster</name>
        <dbReference type="ChEBI" id="CHEBI:190135"/>
    </ligand>
</feature>
<feature type="binding site" evidence="1">
    <location>
        <position position="348"/>
    </location>
    <ligand>
        <name>[2Fe-2S] cluster</name>
        <dbReference type="ChEBI" id="CHEBI:190135"/>
    </ligand>
</feature>
<feature type="binding site" evidence="1">
    <location>
        <position position="351"/>
    </location>
    <ligand>
        <name>[2Fe-2S] cluster</name>
        <dbReference type="ChEBI" id="CHEBI:190135"/>
    </ligand>
</feature>
<feature type="binding site" evidence="1">
    <location>
        <position position="353"/>
    </location>
    <ligand>
        <name>[2Fe-2S] cluster</name>
        <dbReference type="ChEBI" id="CHEBI:190135"/>
    </ligand>
</feature>
<feature type="binding site" evidence="1">
    <location>
        <position position="380"/>
    </location>
    <ligand>
        <name>[4Fe-4S] cluster</name>
        <dbReference type="ChEBI" id="CHEBI:49883"/>
    </ligand>
</feature>
<feature type="binding site" evidence="1">
    <location>
        <position position="383"/>
    </location>
    <ligand>
        <name>[4Fe-4S] cluster</name>
        <dbReference type="ChEBI" id="CHEBI:49883"/>
    </ligand>
</feature>
<feature type="binding site" evidence="1">
    <location>
        <position position="391"/>
    </location>
    <ligand>
        <name>[4Fe-4S] cluster</name>
        <dbReference type="ChEBI" id="CHEBI:49883"/>
    </ligand>
</feature>
<feature type="binding site" evidence="1">
    <location>
        <position position="394"/>
    </location>
    <ligand>
        <name>[4Fe-4S] cluster</name>
        <dbReference type="ChEBI" id="CHEBI:49883"/>
    </ligand>
</feature>
<evidence type="ECO:0000255" key="1">
    <source>
        <dbReference type="HAMAP-Rule" id="MF_03115"/>
    </source>
</evidence>
<proteinExistence type="inferred from homology"/>
<gene>
    <name type="ORF">TGVEG_216900</name>
</gene>
<accession>B9Q0C2</accession>
<accession>V4Z8I4</accession>
<name>DRE2_TOXGV</name>
<comment type="function">
    <text evidence="1">Component of the cytosolic iron-sulfur (Fe-S) protein assembly (CIA) machinery. Required for the maturation of extramitochondrial Fe-S proteins. Part of an electron transfer chain functioning in an early step of cytosolic Fe-S biogenesis, facilitating the de novo assembly of a [4Fe-4S] cluster on the cytosolic Fe-S scaffold complex. Electrons are transferred from NADPH via a FAD- and FMN-containing diflavin oxidoreductase. Together with the diflavin oxidoreductase, also required for the assembly of the diferric tyrosyl radical cofactor of ribonucleotide reductase (RNR), probably by providing electrons for reduction during radical cofactor maturation in the catalytic small subunit.</text>
</comment>
<comment type="cofactor">
    <cofactor evidence="1">
        <name>[2Fe-2S] cluster</name>
        <dbReference type="ChEBI" id="CHEBI:190135"/>
    </cofactor>
</comment>
<comment type="cofactor">
    <cofactor evidence="1">
        <name>[4Fe-4S] cluster</name>
        <dbReference type="ChEBI" id="CHEBI:49883"/>
    </cofactor>
</comment>
<comment type="subunit">
    <text evidence="1">Monomer.</text>
</comment>
<comment type="subcellular location">
    <subcellularLocation>
        <location evidence="1">Cytoplasm</location>
    </subcellularLocation>
    <subcellularLocation>
        <location evidence="1">Mitochondrion intermembrane space</location>
    </subcellularLocation>
</comment>
<comment type="domain">
    <text evidence="1">The C-terminal domain binds 2 Fe-S clusters but is otherwise mostly in an intrinsically disordered conformation.</text>
</comment>
<comment type="domain">
    <text evidence="1">The N-terminal domain has structural similarity with S-adenosyl-L-methionine-dependent methyltransferases, but does not bind S-adenosyl-L-methionine. It is required for correct assembly of the 2 Fe-S clusters.</text>
</comment>
<comment type="domain">
    <text evidence="1">The twin Cx2C motifs are involved in the recognition by the mitochondrial MIA40-ERV1 disulfide relay system. The formation of 2 disulfide bonds in the Cx2C motifs through dithiol/disulfide exchange reactions effectively traps the protein in the mitochondrial intermembrane space.</text>
</comment>
<comment type="similarity">
    <text evidence="1">Belongs to the anamorsin family.</text>
</comment>
<sequence length="443" mass="47563">MISLAVFPSDFLRSTRSVFLCGDSNLDLTSSVEQCRSRTRDLRTPRRKRDRIPCLNAVGDKFLQVESFSRDEAFSTWNSHCRPLCVVSFVPSQSSVVFSDLSLQAALSRPASACLLCLRVSRVSTFLFRFSAMAKLSSAPRVLVLSAEDSVVSAADASKKDTVLTVLHPDTIIENAADAPSVLYDGVLILDAGKSRENATGNSQGKSAEFAAARSALQAFAQAVCRLVAAGGFVFLAGGSGEREEVHRLVKRLLIYEGLVSAQDSEVAAFVADHLPRVDSSLMWTGRKPTWAAGVADALSGNRGALPNGTAQTDGDDFIDESTLIDPTESYQPLGKDRSSCASRPKACPNCTCGRKEAEEAAEKEERRRKLETGEIRSSCGNCYLGDAFRCAGCPYRGMPAFKPGEKVSLEATSVEAPGGGMQKQVATVMSNKVQITDLGDDM</sequence>